<keyword id="KW-0520">NAD</keyword>
<keyword id="KW-0536">Nodulation</keyword>
<keyword id="KW-0560">Oxidoreductase</keyword>
<keyword id="KW-0614">Plasmid</keyword>
<keyword id="KW-1185">Reference proteome</keyword>
<sequence length="245" mass="26088">MFELTGRKALVTGASGAIGGAIARVLHAQGAIVGLHGTQIEKLETLATELGDRVKLFPANLANRDEVKALGQRAEADLEGVDILVNNAGITKDGLFLHMADPDWDIVLEVNLTAMFRLTREITQQMIRRRNGRIINVTSVAGAIGNPGQTNYCASKAGMIGFSKSLAQEIATRNITVNCVAPGFIESAMTDKLNHKQKEKIMVAIPIHRMGTGTEVASAVAYLASDHAAYVTGQTIHVNGGMAMI</sequence>
<reference key="1">
    <citation type="journal article" date="1986" name="Nucleic Acids Res.">
        <title>Nucleotide sequence of Rhizobium meliloti RCR2011 genes involved in host specificity of nodulation.</title>
        <authorList>
            <person name="Debelle F."/>
            <person name="Sharma S.B."/>
        </authorList>
    </citation>
    <scope>NUCLEOTIDE SEQUENCE [GENOMIC DNA]</scope>
    <source>
        <strain>RCR2011 / SU47</strain>
    </source>
</reference>
<reference key="2">
    <citation type="journal article" date="1987" name="Genetics">
        <title>Extended region of nodulation genes in Rhizobium meliloti 1021. II. Nucleotide sequence, transcription start sites and protein products.</title>
        <authorList>
            <person name="Fisher R.F."/>
            <person name="Swanson J.A."/>
            <person name="Mulligan J.T."/>
            <person name="Long S.R."/>
        </authorList>
    </citation>
    <scope>NUCLEOTIDE SEQUENCE [GENOMIC DNA]</scope>
    <source>
        <strain>1021</strain>
    </source>
</reference>
<reference key="3">
    <citation type="journal article" date="2001" name="Proc. Natl. Acad. Sci. U.S.A.">
        <title>Nucleotide sequence and predicted functions of the entire Sinorhizobium meliloti pSymA megaplasmid.</title>
        <authorList>
            <person name="Barnett M.J."/>
            <person name="Fisher R.F."/>
            <person name="Jones T."/>
            <person name="Komp C."/>
            <person name="Abola A.P."/>
            <person name="Barloy-Hubler F."/>
            <person name="Bowser L."/>
            <person name="Capela D."/>
            <person name="Galibert F."/>
            <person name="Gouzy J."/>
            <person name="Gurjal M."/>
            <person name="Hong A."/>
            <person name="Huizar L."/>
            <person name="Hyman R.W."/>
            <person name="Kahn D."/>
            <person name="Kahn M.L."/>
            <person name="Kalman S."/>
            <person name="Keating D.H."/>
            <person name="Palm C."/>
            <person name="Peck M.C."/>
            <person name="Surzycki R."/>
            <person name="Wells D.H."/>
            <person name="Yeh K.-C."/>
            <person name="Davis R.W."/>
            <person name="Federspiel N.A."/>
            <person name="Long S.R."/>
        </authorList>
    </citation>
    <scope>NUCLEOTIDE SEQUENCE [LARGE SCALE GENOMIC DNA]</scope>
    <source>
        <strain>1021</strain>
    </source>
</reference>
<reference key="4">
    <citation type="journal article" date="2001" name="Science">
        <title>The composite genome of the legume symbiont Sinorhizobium meliloti.</title>
        <authorList>
            <person name="Galibert F."/>
            <person name="Finan T.M."/>
            <person name="Long S.R."/>
            <person name="Puehler A."/>
            <person name="Abola P."/>
            <person name="Ampe F."/>
            <person name="Barloy-Hubler F."/>
            <person name="Barnett M.J."/>
            <person name="Becker A."/>
            <person name="Boistard P."/>
            <person name="Bothe G."/>
            <person name="Boutry M."/>
            <person name="Bowser L."/>
            <person name="Buhrmester J."/>
            <person name="Cadieu E."/>
            <person name="Capela D."/>
            <person name="Chain P."/>
            <person name="Cowie A."/>
            <person name="Davis R.W."/>
            <person name="Dreano S."/>
            <person name="Federspiel N.A."/>
            <person name="Fisher R.F."/>
            <person name="Gloux S."/>
            <person name="Godrie T."/>
            <person name="Goffeau A."/>
            <person name="Golding B."/>
            <person name="Gouzy J."/>
            <person name="Gurjal M."/>
            <person name="Hernandez-Lucas I."/>
            <person name="Hong A."/>
            <person name="Huizar L."/>
            <person name="Hyman R.W."/>
            <person name="Jones T."/>
            <person name="Kahn D."/>
            <person name="Kahn M.L."/>
            <person name="Kalman S."/>
            <person name="Keating D.H."/>
            <person name="Kiss E."/>
            <person name="Komp C."/>
            <person name="Lelaure V."/>
            <person name="Masuy D."/>
            <person name="Palm C."/>
            <person name="Peck M.C."/>
            <person name="Pohl T.M."/>
            <person name="Portetelle D."/>
            <person name="Purnelle B."/>
            <person name="Ramsperger U."/>
            <person name="Surzycki R."/>
            <person name="Thebault P."/>
            <person name="Vandenbol M."/>
            <person name="Vorhoelter F.J."/>
            <person name="Weidner S."/>
            <person name="Wells D.H."/>
            <person name="Wong K."/>
            <person name="Yeh K.-C."/>
            <person name="Batut J."/>
        </authorList>
    </citation>
    <scope>NUCLEOTIDE SEQUENCE [LARGE SCALE GENOMIC DNA]</scope>
    <source>
        <strain>1021</strain>
    </source>
</reference>
<dbReference type="EMBL" id="X04379">
    <property type="protein sequence ID" value="CAA27962.1"/>
    <property type="molecule type" value="Genomic_DNA"/>
</dbReference>
<dbReference type="EMBL" id="Y00604">
    <property type="protein sequence ID" value="CAA68649.1"/>
    <property type="molecule type" value="Genomic_DNA"/>
</dbReference>
<dbReference type="EMBL" id="AE006469">
    <property type="protein sequence ID" value="AAK65125.1"/>
    <property type="molecule type" value="Genomic_DNA"/>
</dbReference>
<dbReference type="PIR" id="C24706">
    <property type="entry name" value="C24706"/>
</dbReference>
<dbReference type="PIR" id="C95320">
    <property type="entry name" value="C95320"/>
</dbReference>
<dbReference type="RefSeq" id="NP_435713.1">
    <property type="nucleotide sequence ID" value="NC_003037.1"/>
</dbReference>
<dbReference type="RefSeq" id="WP_003532825.1">
    <property type="nucleotide sequence ID" value="NC_003037.1"/>
</dbReference>
<dbReference type="SMR" id="P06234"/>
<dbReference type="EnsemblBacteria" id="AAK65125">
    <property type="protein sequence ID" value="AAK65125"/>
    <property type="gene ID" value="SMa0854"/>
</dbReference>
<dbReference type="KEGG" id="sme:SMa0854"/>
<dbReference type="PATRIC" id="fig|266834.11.peg.477"/>
<dbReference type="HOGENOM" id="CLU_010194_1_3_5"/>
<dbReference type="OrthoDB" id="9804774at2"/>
<dbReference type="PRO" id="PR:P06234"/>
<dbReference type="Proteomes" id="UP000001976">
    <property type="component" value="Plasmid pSymA"/>
</dbReference>
<dbReference type="GO" id="GO:0004316">
    <property type="term" value="F:3-oxoacyl-[acyl-carrier-protein] reductase (NADPH) activity"/>
    <property type="evidence" value="ECO:0007669"/>
    <property type="project" value="InterPro"/>
</dbReference>
<dbReference type="GO" id="GO:0051287">
    <property type="term" value="F:NAD binding"/>
    <property type="evidence" value="ECO:0007669"/>
    <property type="project" value="InterPro"/>
</dbReference>
<dbReference type="GO" id="GO:0006633">
    <property type="term" value="P:fatty acid biosynthetic process"/>
    <property type="evidence" value="ECO:0007669"/>
    <property type="project" value="InterPro"/>
</dbReference>
<dbReference type="CDD" id="cd05333">
    <property type="entry name" value="BKR_SDR_c"/>
    <property type="match status" value="1"/>
</dbReference>
<dbReference type="FunFam" id="3.40.50.720:FF:000173">
    <property type="entry name" value="3-oxoacyl-[acyl-carrier protein] reductase"/>
    <property type="match status" value="1"/>
</dbReference>
<dbReference type="Gene3D" id="3.40.50.720">
    <property type="entry name" value="NAD(P)-binding Rossmann-like Domain"/>
    <property type="match status" value="1"/>
</dbReference>
<dbReference type="InterPro" id="IPR011284">
    <property type="entry name" value="3oxo_ACP_reduc"/>
</dbReference>
<dbReference type="InterPro" id="IPR036291">
    <property type="entry name" value="NAD(P)-bd_dom_sf"/>
</dbReference>
<dbReference type="InterPro" id="IPR020904">
    <property type="entry name" value="Sc_DH/Rdtase_CS"/>
</dbReference>
<dbReference type="InterPro" id="IPR050259">
    <property type="entry name" value="SDR"/>
</dbReference>
<dbReference type="InterPro" id="IPR002347">
    <property type="entry name" value="SDR_fam"/>
</dbReference>
<dbReference type="NCBIfam" id="TIGR01830">
    <property type="entry name" value="3oxo_ACP_reduc"/>
    <property type="match status" value="1"/>
</dbReference>
<dbReference type="NCBIfam" id="NF009466">
    <property type="entry name" value="PRK12826.1-2"/>
    <property type="match status" value="1"/>
</dbReference>
<dbReference type="NCBIfam" id="NF009547">
    <property type="entry name" value="PRK12936.1"/>
    <property type="match status" value="1"/>
</dbReference>
<dbReference type="PANTHER" id="PTHR42879">
    <property type="entry name" value="3-OXOACYL-(ACYL-CARRIER-PROTEIN) REDUCTASE"/>
    <property type="match status" value="1"/>
</dbReference>
<dbReference type="PANTHER" id="PTHR42879:SF2">
    <property type="entry name" value="3-OXOACYL-[ACYL-CARRIER-PROTEIN] REDUCTASE FABG"/>
    <property type="match status" value="1"/>
</dbReference>
<dbReference type="Pfam" id="PF13561">
    <property type="entry name" value="adh_short_C2"/>
    <property type="match status" value="1"/>
</dbReference>
<dbReference type="PRINTS" id="PR00081">
    <property type="entry name" value="GDHRDH"/>
</dbReference>
<dbReference type="PRINTS" id="PR00080">
    <property type="entry name" value="SDRFAMILY"/>
</dbReference>
<dbReference type="SMART" id="SM00822">
    <property type="entry name" value="PKS_KR"/>
    <property type="match status" value="1"/>
</dbReference>
<dbReference type="SUPFAM" id="SSF51735">
    <property type="entry name" value="NAD(P)-binding Rossmann-fold domains"/>
    <property type="match status" value="1"/>
</dbReference>
<dbReference type="PROSITE" id="PS00061">
    <property type="entry name" value="ADH_SHORT"/>
    <property type="match status" value="1"/>
</dbReference>
<gene>
    <name type="primary">nodG</name>
    <name type="synonym">hsnC</name>
    <name type="ordered locus">RA0467</name>
    <name type="ORF">SMa0854</name>
</gene>
<geneLocation type="plasmid">
    <name>pSymA</name>
    <name>megaplasmid 1</name>
</geneLocation>
<proteinExistence type="inferred from homology"/>
<feature type="chain" id="PRO_0000054733" description="Nodulation protein G">
    <location>
        <begin position="1"/>
        <end position="245"/>
    </location>
</feature>
<feature type="active site" description="Proton acceptor" evidence="2">
    <location>
        <position position="152"/>
    </location>
</feature>
<feature type="binding site" evidence="1">
    <location>
        <begin position="11"/>
        <end position="35"/>
    </location>
    <ligand>
        <name>NAD(+)</name>
        <dbReference type="ChEBI" id="CHEBI:57540"/>
    </ligand>
</feature>
<feature type="binding site" evidence="1">
    <location>
        <position position="139"/>
    </location>
    <ligand>
        <name>substrate</name>
    </ligand>
</feature>
<organism>
    <name type="scientific">Rhizobium meliloti (strain 1021)</name>
    <name type="common">Ensifer meliloti</name>
    <name type="synonym">Sinorhizobium meliloti</name>
    <dbReference type="NCBI Taxonomy" id="266834"/>
    <lineage>
        <taxon>Bacteria</taxon>
        <taxon>Pseudomonadati</taxon>
        <taxon>Pseudomonadota</taxon>
        <taxon>Alphaproteobacteria</taxon>
        <taxon>Hyphomicrobiales</taxon>
        <taxon>Rhizobiaceae</taxon>
        <taxon>Sinorhizobium/Ensifer group</taxon>
        <taxon>Sinorhizobium</taxon>
    </lineage>
</organism>
<protein>
    <recommendedName>
        <fullName>Nodulation protein G</fullName>
    </recommendedName>
    <alternativeName>
        <fullName>Host-specificity of nodulation protein C</fullName>
    </alternativeName>
</protein>
<name>NODG_RHIME</name>
<accession>P06234</accession>
<comment type="function">
    <text>Proposed to modify Nod factor fatty acyl chain.</text>
</comment>
<comment type="similarity">
    <text evidence="3">Belongs to the short-chain dehydrogenases/reductases (SDR) family.</text>
</comment>
<evidence type="ECO:0000250" key="1"/>
<evidence type="ECO:0000255" key="2">
    <source>
        <dbReference type="PROSITE-ProRule" id="PRU10001"/>
    </source>
</evidence>
<evidence type="ECO:0000305" key="3"/>